<dbReference type="EC" id="3.5.1.88" evidence="1"/>
<dbReference type="EMBL" id="AE001437">
    <property type="protein sequence ID" value="AAK80428.1"/>
    <property type="molecule type" value="Genomic_DNA"/>
</dbReference>
<dbReference type="PIR" id="A97205">
    <property type="entry name" value="A97205"/>
</dbReference>
<dbReference type="RefSeq" id="NP_349088.1">
    <property type="nucleotide sequence ID" value="NC_003030.1"/>
</dbReference>
<dbReference type="SMR" id="Q97G95"/>
<dbReference type="STRING" id="272562.CA_C2474"/>
<dbReference type="KEGG" id="cac:CA_C2474"/>
<dbReference type="PATRIC" id="fig|272562.8.peg.2670"/>
<dbReference type="eggNOG" id="COG0242">
    <property type="taxonomic scope" value="Bacteria"/>
</dbReference>
<dbReference type="HOGENOM" id="CLU_061901_4_2_9"/>
<dbReference type="OrthoDB" id="9784988at2"/>
<dbReference type="Proteomes" id="UP000000814">
    <property type="component" value="Chromosome"/>
</dbReference>
<dbReference type="GO" id="GO:0046872">
    <property type="term" value="F:metal ion binding"/>
    <property type="evidence" value="ECO:0007669"/>
    <property type="project" value="UniProtKB-KW"/>
</dbReference>
<dbReference type="GO" id="GO:0042586">
    <property type="term" value="F:peptide deformylase activity"/>
    <property type="evidence" value="ECO:0007669"/>
    <property type="project" value="UniProtKB-UniRule"/>
</dbReference>
<dbReference type="GO" id="GO:0043686">
    <property type="term" value="P:co-translational protein modification"/>
    <property type="evidence" value="ECO:0007669"/>
    <property type="project" value="TreeGrafter"/>
</dbReference>
<dbReference type="GO" id="GO:0006412">
    <property type="term" value="P:translation"/>
    <property type="evidence" value="ECO:0007669"/>
    <property type="project" value="UniProtKB-UniRule"/>
</dbReference>
<dbReference type="CDD" id="cd00487">
    <property type="entry name" value="Pep_deformylase"/>
    <property type="match status" value="1"/>
</dbReference>
<dbReference type="Gene3D" id="3.90.45.10">
    <property type="entry name" value="Peptide deformylase"/>
    <property type="match status" value="1"/>
</dbReference>
<dbReference type="HAMAP" id="MF_00163">
    <property type="entry name" value="Pep_deformylase"/>
    <property type="match status" value="1"/>
</dbReference>
<dbReference type="InterPro" id="IPR023635">
    <property type="entry name" value="Peptide_deformylase"/>
</dbReference>
<dbReference type="InterPro" id="IPR036821">
    <property type="entry name" value="Peptide_deformylase_sf"/>
</dbReference>
<dbReference type="NCBIfam" id="TIGR00079">
    <property type="entry name" value="pept_deformyl"/>
    <property type="match status" value="1"/>
</dbReference>
<dbReference type="NCBIfam" id="NF001159">
    <property type="entry name" value="PRK00150.1-3"/>
    <property type="match status" value="1"/>
</dbReference>
<dbReference type="PANTHER" id="PTHR10458">
    <property type="entry name" value="PEPTIDE DEFORMYLASE"/>
    <property type="match status" value="1"/>
</dbReference>
<dbReference type="PANTHER" id="PTHR10458:SF22">
    <property type="entry name" value="PEPTIDE DEFORMYLASE"/>
    <property type="match status" value="1"/>
</dbReference>
<dbReference type="Pfam" id="PF01327">
    <property type="entry name" value="Pep_deformylase"/>
    <property type="match status" value="1"/>
</dbReference>
<dbReference type="PIRSF" id="PIRSF004749">
    <property type="entry name" value="Pep_def"/>
    <property type="match status" value="1"/>
</dbReference>
<dbReference type="PRINTS" id="PR01576">
    <property type="entry name" value="PDEFORMYLASE"/>
</dbReference>
<dbReference type="SUPFAM" id="SSF56420">
    <property type="entry name" value="Peptide deformylase"/>
    <property type="match status" value="1"/>
</dbReference>
<organism>
    <name type="scientific">Clostridium acetobutylicum (strain ATCC 824 / DSM 792 / JCM 1419 / IAM 19013 / LMG 5710 / NBRC 13948 / NRRL B-527 / VKM B-1787 / 2291 / W)</name>
    <dbReference type="NCBI Taxonomy" id="272562"/>
    <lineage>
        <taxon>Bacteria</taxon>
        <taxon>Bacillati</taxon>
        <taxon>Bacillota</taxon>
        <taxon>Clostridia</taxon>
        <taxon>Eubacteriales</taxon>
        <taxon>Clostridiaceae</taxon>
        <taxon>Clostridium</taxon>
    </lineage>
</organism>
<comment type="function">
    <text evidence="1">Removes the formyl group from the N-terminal Met of newly synthesized proteins. Requires at least a dipeptide for an efficient rate of reaction. N-terminal L-methionine is a prerequisite for activity but the enzyme has broad specificity at other positions.</text>
</comment>
<comment type="catalytic activity">
    <reaction evidence="1">
        <text>N-terminal N-formyl-L-methionyl-[peptide] + H2O = N-terminal L-methionyl-[peptide] + formate</text>
        <dbReference type="Rhea" id="RHEA:24420"/>
        <dbReference type="Rhea" id="RHEA-COMP:10639"/>
        <dbReference type="Rhea" id="RHEA-COMP:10640"/>
        <dbReference type="ChEBI" id="CHEBI:15377"/>
        <dbReference type="ChEBI" id="CHEBI:15740"/>
        <dbReference type="ChEBI" id="CHEBI:49298"/>
        <dbReference type="ChEBI" id="CHEBI:64731"/>
        <dbReference type="EC" id="3.5.1.88"/>
    </reaction>
</comment>
<comment type="cofactor">
    <cofactor evidence="1">
        <name>Fe(2+)</name>
        <dbReference type="ChEBI" id="CHEBI:29033"/>
    </cofactor>
    <text evidence="1">Binds 1 Fe(2+) ion.</text>
</comment>
<comment type="similarity">
    <text evidence="1">Belongs to the polypeptide deformylase family.</text>
</comment>
<feature type="chain" id="PRO_0000082767" description="Peptide deformylase 2">
    <location>
        <begin position="1"/>
        <end position="150"/>
    </location>
</feature>
<feature type="active site" evidence="1">
    <location>
        <position position="132"/>
    </location>
</feature>
<feature type="binding site" evidence="1">
    <location>
        <position position="89"/>
    </location>
    <ligand>
        <name>Fe cation</name>
        <dbReference type="ChEBI" id="CHEBI:24875"/>
    </ligand>
</feature>
<feature type="binding site" evidence="1">
    <location>
        <position position="131"/>
    </location>
    <ligand>
        <name>Fe cation</name>
        <dbReference type="ChEBI" id="CHEBI:24875"/>
    </ligand>
</feature>
<feature type="binding site" evidence="1">
    <location>
        <position position="135"/>
    </location>
    <ligand>
        <name>Fe cation</name>
        <dbReference type="ChEBI" id="CHEBI:24875"/>
    </ligand>
</feature>
<gene>
    <name evidence="1" type="primary">def2</name>
    <name type="ordered locus">CA_C2474</name>
</gene>
<protein>
    <recommendedName>
        <fullName evidence="1">Peptide deformylase 2</fullName>
        <shortName evidence="1">PDF 2</shortName>
        <ecNumber evidence="1">3.5.1.88</ecNumber>
    </recommendedName>
    <alternativeName>
        <fullName evidence="1">Polypeptide deformylase 2</fullName>
    </alternativeName>
</protein>
<name>DEF2_CLOAB</name>
<accession>Q97G95</accession>
<keyword id="KW-0378">Hydrolase</keyword>
<keyword id="KW-0408">Iron</keyword>
<keyword id="KW-0479">Metal-binding</keyword>
<keyword id="KW-0648">Protein biosynthesis</keyword>
<keyword id="KW-1185">Reference proteome</keyword>
<evidence type="ECO:0000255" key="1">
    <source>
        <dbReference type="HAMAP-Rule" id="MF_00163"/>
    </source>
</evidence>
<reference key="1">
    <citation type="journal article" date="2001" name="J. Bacteriol.">
        <title>Genome sequence and comparative analysis of the solvent-producing bacterium Clostridium acetobutylicum.</title>
        <authorList>
            <person name="Noelling J."/>
            <person name="Breton G."/>
            <person name="Omelchenko M.V."/>
            <person name="Makarova K.S."/>
            <person name="Zeng Q."/>
            <person name="Gibson R."/>
            <person name="Lee H.M."/>
            <person name="Dubois J."/>
            <person name="Qiu D."/>
            <person name="Hitti J."/>
            <person name="Wolf Y.I."/>
            <person name="Tatusov R.L."/>
            <person name="Sabathe F."/>
            <person name="Doucette-Stamm L.A."/>
            <person name="Soucaille P."/>
            <person name="Daly M.J."/>
            <person name="Bennett G.N."/>
            <person name="Koonin E.V."/>
            <person name="Smith D.R."/>
        </authorList>
    </citation>
    <scope>NUCLEOTIDE SEQUENCE [LARGE SCALE GENOMIC DNA]</scope>
    <source>
        <strain>ATCC 824 / DSM 792 / JCM 1419 / IAM 19013 / LMG 5710 / NBRC 13948 / NRRL B-527 / VKM B-1787 / 2291 / W</strain>
    </source>
</reference>
<proteinExistence type="inferred from homology"/>
<sequence>MALRQIRLSEDEILRKKSRPVEVVDDKIRQILDDMLDTLQNTENGAAIAAPQVGILKQLVVIATGEDIIKLVNPKIVKKEGEQEVVEGCLSIPNVYGKLKRPKKVTVEALNENGEKITLTGEGFLAKCFCHEIDHLDGILFTDLVTEYIK</sequence>